<keyword id="KW-0025">Alternative splicing</keyword>
<keyword id="KW-1185">Reference proteome</keyword>
<sequence>MVQTYRSPVRIYKHPFEIVMAAYEMRFPTCPQIPIFVGSEVTYEYKSVDGAEWVIDRKCQLNVEAPYLVKKIAGVDYVYFSQKNSLDRRKRTLDIEATNISFSSRINVKENCTYYVHAENENWTCFEQSASLDVKNFFGLESAVEKLAVRQYGANLAKGKEILEFFIEELLKKTTHIERFRDADQEETTSATDSAIEMKELSDGDAVLVNDRPPMLAAETDEMRTARATASFDDADSKLEAEYIRRFLGQLSPLEESRLCEIKYSLQAHHKGKLPNDAHLLRFLRARDFDVAKAKDMVHASIIWRKQHNVDKILEEWTRPTVIKQYFPGCWHNSDKAGRPMYILRFGQLDTKGMLRSCGVENLVKLTLSICEDGLQRAAEATRKLGTPISSWSLVVDLDGLSMRHLWRPGVQCLLKIIEIVEANYPETMGQVLVVRAPRVFPVLWTLISPFIDEKTRKKFMVSGGSGGDLKEELRKHIEEKFIPDFLGGSCLTTNCGLGGHVPKSMYLPVEEQEGASSSEDPLHSTYTSTATWRGYPVEVVIPIETAGCVLTWDFDVLKNDCEFSLYFSTEKIEQPAVRDGAQSPTTILNPVEMVSAAIGGASHQHPDLQCAPELKIGTPQLRLEEKAVVFQEGDSMQGSHYCSRAGTYIMQWRVPETAAGHSSTFDFGSHKCRLIYYYEILNSENFRGSVASLESCRSSSFSSIAPPTPPTPGTPRNP</sequence>
<organism>
    <name type="scientific">Caenorhabditis elegans</name>
    <dbReference type="NCBI Taxonomy" id="6239"/>
    <lineage>
        <taxon>Eukaryota</taxon>
        <taxon>Metazoa</taxon>
        <taxon>Ecdysozoa</taxon>
        <taxon>Nematoda</taxon>
        <taxon>Chromadorea</taxon>
        <taxon>Rhabditida</taxon>
        <taxon>Rhabditina</taxon>
        <taxon>Rhabditomorpha</taxon>
        <taxon>Rhabditoidea</taxon>
        <taxon>Rhabditidae</taxon>
        <taxon>Peloderinae</taxon>
        <taxon>Caenorhabditis</taxon>
    </lineage>
</organism>
<comment type="alternative products">
    <event type="alternative splicing"/>
    <isoform>
        <id>Q03606-1</id>
        <name>a</name>
        <sequence type="displayed"/>
    </isoform>
    <isoform>
        <id>Q03606-2</id>
        <name>b</name>
        <sequence type="described" ref="VSP_019769 VSP_019770"/>
    </isoform>
</comment>
<evidence type="ECO:0000255" key="1">
    <source>
        <dbReference type="PROSITE-ProRule" id="PRU00056"/>
    </source>
</evidence>
<evidence type="ECO:0000255" key="2">
    <source>
        <dbReference type="PROSITE-ProRule" id="PRU00096"/>
    </source>
</evidence>
<evidence type="ECO:0000255" key="3">
    <source>
        <dbReference type="PROSITE-ProRule" id="PRU00158"/>
    </source>
</evidence>
<evidence type="ECO:0000256" key="4">
    <source>
        <dbReference type="SAM" id="MobiDB-lite"/>
    </source>
</evidence>
<evidence type="ECO:0000305" key="5"/>
<accession>Q03606</accession>
<accession>Q03608</accession>
<accession>Q2EEP6</accession>
<accession>Q2EEP7</accession>
<dbReference type="EMBL" id="Z19158">
    <property type="protein sequence ID" value="CAJ76964.1"/>
    <property type="molecule type" value="Genomic_DNA"/>
</dbReference>
<dbReference type="EMBL" id="Z19158">
    <property type="protein sequence ID" value="CAJ76965.1"/>
    <property type="molecule type" value="Genomic_DNA"/>
</dbReference>
<dbReference type="PIR" id="B88551">
    <property type="entry name" value="B88551"/>
</dbReference>
<dbReference type="PIR" id="S28303">
    <property type="entry name" value="S28303"/>
</dbReference>
<dbReference type="PIR" id="S28305">
    <property type="entry name" value="S28305"/>
</dbReference>
<dbReference type="RefSeq" id="NP_001040875.1">
    <molecule id="Q03606-1"/>
    <property type="nucleotide sequence ID" value="NM_001047410.8"/>
</dbReference>
<dbReference type="RefSeq" id="NP_001040876.1">
    <molecule id="Q03606-2"/>
    <property type="nucleotide sequence ID" value="NM_001047411.5"/>
</dbReference>
<dbReference type="SMR" id="Q03606"/>
<dbReference type="BioGRID" id="41501">
    <property type="interactions" value="3"/>
</dbReference>
<dbReference type="FunCoup" id="Q03606">
    <property type="interactions" value="2249"/>
</dbReference>
<dbReference type="iPTMnet" id="Q03606"/>
<dbReference type="PaxDb" id="6239-T23G5.2a.1"/>
<dbReference type="PeptideAtlas" id="Q03606"/>
<dbReference type="EnsemblMetazoa" id="T23G5.2a.1">
    <molecule id="Q03606-1"/>
    <property type="protein sequence ID" value="T23G5.2a.1"/>
    <property type="gene ID" value="WBGene00011962"/>
</dbReference>
<dbReference type="EnsemblMetazoa" id="T23G5.2b.1">
    <molecule id="Q03606-2"/>
    <property type="protein sequence ID" value="T23G5.2b.1"/>
    <property type="gene ID" value="WBGene00011962"/>
</dbReference>
<dbReference type="GeneID" id="176302"/>
<dbReference type="KEGG" id="cel:CELE_T23G5.2"/>
<dbReference type="UCSC" id="T23G5.2a.1">
    <molecule id="Q03606-1"/>
    <property type="organism name" value="c. elegans"/>
</dbReference>
<dbReference type="AGR" id="WB:WBGene00011962"/>
<dbReference type="CTD" id="176302"/>
<dbReference type="WormBase" id="T23G5.2a">
    <molecule id="Q03606-1"/>
    <property type="protein sequence ID" value="CE39782"/>
    <property type="gene ID" value="WBGene00011962"/>
</dbReference>
<dbReference type="WormBase" id="T23G5.2b">
    <molecule id="Q03606-2"/>
    <property type="protein sequence ID" value="CE39783"/>
    <property type="gene ID" value="WBGene00011962"/>
</dbReference>
<dbReference type="eggNOG" id="KOG1471">
    <property type="taxonomic scope" value="Eukaryota"/>
</dbReference>
<dbReference type="GeneTree" id="ENSGT00940000168605"/>
<dbReference type="HOGENOM" id="CLU_023840_0_0_1"/>
<dbReference type="InParanoid" id="Q03606"/>
<dbReference type="OMA" id="AEWTCFD"/>
<dbReference type="OrthoDB" id="30289at2759"/>
<dbReference type="PhylomeDB" id="Q03606"/>
<dbReference type="PRO" id="PR:Q03606"/>
<dbReference type="Proteomes" id="UP000001940">
    <property type="component" value="Chromosome III"/>
</dbReference>
<dbReference type="Bgee" id="WBGene00011962">
    <property type="expression patterns" value="Expressed in pharyngeal muscle cell (C elegans) and 4 other cell types or tissues"/>
</dbReference>
<dbReference type="GO" id="GO:0005737">
    <property type="term" value="C:cytoplasm"/>
    <property type="evidence" value="ECO:0000318"/>
    <property type="project" value="GO_Central"/>
</dbReference>
<dbReference type="CDD" id="cd00170">
    <property type="entry name" value="SEC14"/>
    <property type="match status" value="1"/>
</dbReference>
<dbReference type="Gene3D" id="3.40.525.10">
    <property type="entry name" value="CRAL-TRIO lipid binding domain"/>
    <property type="match status" value="1"/>
</dbReference>
<dbReference type="Gene3D" id="2.60.120.680">
    <property type="entry name" value="GOLD domain"/>
    <property type="match status" value="1"/>
</dbReference>
<dbReference type="InterPro" id="IPR001251">
    <property type="entry name" value="CRAL-TRIO_dom"/>
</dbReference>
<dbReference type="InterPro" id="IPR036865">
    <property type="entry name" value="CRAL-TRIO_dom_sf"/>
</dbReference>
<dbReference type="InterPro" id="IPR011074">
    <property type="entry name" value="CRAL/TRIO_N_dom"/>
</dbReference>
<dbReference type="InterPro" id="IPR036273">
    <property type="entry name" value="CRAL/TRIO_N_dom_sf"/>
</dbReference>
<dbReference type="InterPro" id="IPR009038">
    <property type="entry name" value="GOLD_dom"/>
</dbReference>
<dbReference type="InterPro" id="IPR036598">
    <property type="entry name" value="GOLD_dom_sf"/>
</dbReference>
<dbReference type="InterPro" id="IPR006797">
    <property type="entry name" value="PRELI/MSF1_dom"/>
</dbReference>
<dbReference type="InterPro" id="IPR051064">
    <property type="entry name" value="SEC14/CRAL-TRIO_domain"/>
</dbReference>
<dbReference type="PANTHER" id="PTHR23324:SF66">
    <property type="entry name" value="PROTEIN REAL-TIME"/>
    <property type="match status" value="1"/>
</dbReference>
<dbReference type="PANTHER" id="PTHR23324">
    <property type="entry name" value="SEC14 RELATED PROTEIN"/>
    <property type="match status" value="1"/>
</dbReference>
<dbReference type="Pfam" id="PF00650">
    <property type="entry name" value="CRAL_TRIO"/>
    <property type="match status" value="1"/>
</dbReference>
<dbReference type="Pfam" id="PF03765">
    <property type="entry name" value="CRAL_TRIO_N"/>
    <property type="match status" value="1"/>
</dbReference>
<dbReference type="Pfam" id="PF04707">
    <property type="entry name" value="PRELI"/>
    <property type="match status" value="1"/>
</dbReference>
<dbReference type="PRINTS" id="PR00180">
    <property type="entry name" value="CRETINALDHBP"/>
</dbReference>
<dbReference type="SMART" id="SM01100">
    <property type="entry name" value="CRAL_TRIO_N"/>
    <property type="match status" value="1"/>
</dbReference>
<dbReference type="SMART" id="SM00516">
    <property type="entry name" value="SEC14"/>
    <property type="match status" value="1"/>
</dbReference>
<dbReference type="SUPFAM" id="SSF52087">
    <property type="entry name" value="CRAL/TRIO domain"/>
    <property type="match status" value="1"/>
</dbReference>
<dbReference type="SUPFAM" id="SSF46938">
    <property type="entry name" value="CRAL/TRIO N-terminal domain"/>
    <property type="match status" value="1"/>
</dbReference>
<dbReference type="SUPFAM" id="SSF101576">
    <property type="entry name" value="Supernatant protein factor (SPF), C-terminal domain"/>
    <property type="match status" value="1"/>
</dbReference>
<dbReference type="PROSITE" id="PS50191">
    <property type="entry name" value="CRAL_TRIO"/>
    <property type="match status" value="1"/>
</dbReference>
<dbReference type="PROSITE" id="PS50866">
    <property type="entry name" value="GOLD"/>
    <property type="match status" value="1"/>
</dbReference>
<dbReference type="PROSITE" id="PS50904">
    <property type="entry name" value="PRELI_MSF1"/>
    <property type="match status" value="1"/>
</dbReference>
<proteinExistence type="predicted"/>
<reference key="1">
    <citation type="journal article" date="1994" name="Nature">
        <title>2.2 Mb of contiguous nucleotide sequence from chromosome III of C. elegans.</title>
        <authorList>
            <person name="Wilson R."/>
            <person name="Ainscough R."/>
            <person name="Anderson K."/>
            <person name="Baynes C."/>
            <person name="Berks M."/>
            <person name="Bonfield J."/>
            <person name="Burton J."/>
            <person name="Connell M."/>
            <person name="Copsey T."/>
            <person name="Cooper J."/>
            <person name="Coulson A."/>
            <person name="Craxton M."/>
            <person name="Dear S."/>
            <person name="Du Z."/>
            <person name="Durbin R."/>
            <person name="Favello A."/>
            <person name="Fraser A."/>
            <person name="Fulton L."/>
            <person name="Gardner A."/>
            <person name="Green P."/>
            <person name="Hawkins T."/>
            <person name="Hillier L."/>
            <person name="Jier M."/>
            <person name="Johnston L."/>
            <person name="Jones M."/>
            <person name="Kershaw J."/>
            <person name="Kirsten J."/>
            <person name="Laisster N."/>
            <person name="Latreille P."/>
            <person name="Lightning J."/>
            <person name="Lloyd C."/>
            <person name="Mortimore B."/>
            <person name="O'Callaghan M."/>
            <person name="Parsons J."/>
            <person name="Percy C."/>
            <person name="Rifken L."/>
            <person name="Roopra A."/>
            <person name="Saunders D."/>
            <person name="Shownkeen R."/>
            <person name="Sims M."/>
            <person name="Smaldon N."/>
            <person name="Smith A."/>
            <person name="Smith M."/>
            <person name="Sonnhammer E."/>
            <person name="Staden R."/>
            <person name="Sulston J."/>
            <person name="Thierry-Mieg J."/>
            <person name="Thomas K."/>
            <person name="Vaudin M."/>
            <person name="Vaughan K."/>
            <person name="Waterston R."/>
            <person name="Watson A."/>
            <person name="Weinstock L."/>
            <person name="Wilkinson-Sproat J."/>
            <person name="Wohldman P."/>
        </authorList>
    </citation>
    <scope>NUCLEOTIDE SEQUENCE [LARGE SCALE GENOMIC DNA]</scope>
    <source>
        <strain>Bristol N2</strain>
    </source>
</reference>
<reference key="2">
    <citation type="journal article" date="1998" name="Science">
        <title>Genome sequence of the nematode C. elegans: a platform for investigating biology.</title>
        <authorList>
            <consortium name="The C. elegans sequencing consortium"/>
        </authorList>
    </citation>
    <scope>NUCLEOTIDE SEQUENCE [LARGE SCALE GENOMIC DNA]</scope>
    <scope>ALTERNATIVE SPLICING</scope>
    <source>
        <strain>Bristol N2</strain>
    </source>
</reference>
<feature type="chain" id="PRO_0000210751" description="CRAL-TRIO domain-containing protein T23G5.2">
    <location>
        <begin position="1"/>
        <end position="719"/>
    </location>
</feature>
<feature type="domain" description="PRELI/MSF1" evidence="3">
    <location>
        <begin position="2"/>
        <end position="175"/>
    </location>
</feature>
<feature type="domain" description="CRAL-TRIO" evidence="1">
    <location>
        <begin position="319"/>
        <end position="495"/>
    </location>
</feature>
<feature type="domain" description="GOLD" evidence="2">
    <location>
        <begin position="524"/>
        <end position="681"/>
    </location>
</feature>
<feature type="region of interest" description="Disordered" evidence="4">
    <location>
        <begin position="700"/>
        <end position="719"/>
    </location>
</feature>
<feature type="compositionally biased region" description="Pro residues" evidence="4">
    <location>
        <begin position="707"/>
        <end position="719"/>
    </location>
</feature>
<feature type="splice variant" id="VSP_019769" description="In isoform b." evidence="5">
    <original>ADS</original>
    <variation>GAL</variation>
    <location>
        <begin position="235"/>
        <end position="237"/>
    </location>
</feature>
<feature type="splice variant" id="VSP_019770" description="In isoform b." evidence="5">
    <location>
        <begin position="238"/>
        <end position="719"/>
    </location>
</feature>
<gene>
    <name type="ORF">T23G5.2</name>
</gene>
<name>YN02_CAEEL</name>
<protein>
    <recommendedName>
        <fullName>CRAL-TRIO domain-containing protein T23G5.2</fullName>
    </recommendedName>
</protein>